<gene>
    <name type="primary">catB</name>
    <name type="ORF">AN9339</name>
</gene>
<feature type="signal peptide" evidence="2">
    <location>
        <begin position="1"/>
        <end position="15"/>
    </location>
</feature>
<feature type="chain" id="PRO_0000004686" description="Catalase B">
    <location>
        <begin position="16"/>
        <end position="722"/>
    </location>
</feature>
<feature type="active site" evidence="3">
    <location>
        <position position="100"/>
    </location>
</feature>
<feature type="active site" evidence="3">
    <location>
        <position position="173"/>
    </location>
</feature>
<feature type="binding site" description="axial binding residue" evidence="1">
    <location>
        <position position="388"/>
    </location>
    <ligand>
        <name>heme</name>
        <dbReference type="ChEBI" id="CHEBI:30413"/>
    </ligand>
    <ligandPart>
        <name>Fe</name>
        <dbReference type="ChEBI" id="CHEBI:18248"/>
    </ligandPart>
</feature>
<feature type="sequence conflict" description="In Ref. 1; AAC49713." evidence="5" ref="1">
    <location>
        <position position="382"/>
    </location>
</feature>
<keyword id="KW-0349">Heme</keyword>
<keyword id="KW-0376">Hydrogen peroxide</keyword>
<keyword id="KW-0408">Iron</keyword>
<keyword id="KW-0479">Metal-binding</keyword>
<keyword id="KW-0560">Oxidoreductase</keyword>
<keyword id="KW-0575">Peroxidase</keyword>
<keyword id="KW-1185">Reference proteome</keyword>
<keyword id="KW-0964">Secreted</keyword>
<keyword id="KW-0732">Signal</keyword>
<reference key="1">
    <citation type="journal article" date="1997" name="J. Bacteriol.">
        <title>Two divergent catalase genes are differentially regulated during Aspergillus nidulans development and oxidative stress.</title>
        <authorList>
            <person name="Kawasaki L."/>
            <person name="Wysong D."/>
            <person name="Diamond R."/>
            <person name="Aguirre J."/>
        </authorList>
    </citation>
    <scope>NUCLEOTIDE SEQUENCE [GENOMIC DNA]</scope>
    <source>
        <strain>FGSC A4 / ATCC 38163 / CBS 112.46 / NRRL 194 / M139</strain>
    </source>
</reference>
<reference key="2">
    <citation type="journal article" date="2005" name="Nature">
        <title>Sequencing of Aspergillus nidulans and comparative analysis with A. fumigatus and A. oryzae.</title>
        <authorList>
            <person name="Galagan J.E."/>
            <person name="Calvo S.E."/>
            <person name="Cuomo C."/>
            <person name="Ma L.-J."/>
            <person name="Wortman J.R."/>
            <person name="Batzoglou S."/>
            <person name="Lee S.-I."/>
            <person name="Bastuerkmen M."/>
            <person name="Spevak C.C."/>
            <person name="Clutterbuck J."/>
            <person name="Kapitonov V."/>
            <person name="Jurka J."/>
            <person name="Scazzocchio C."/>
            <person name="Farman M.L."/>
            <person name="Butler J."/>
            <person name="Purcell S."/>
            <person name="Harris S."/>
            <person name="Braus G.H."/>
            <person name="Draht O."/>
            <person name="Busch S."/>
            <person name="D'Enfert C."/>
            <person name="Bouchier C."/>
            <person name="Goldman G.H."/>
            <person name="Bell-Pedersen D."/>
            <person name="Griffiths-Jones S."/>
            <person name="Doonan J.H."/>
            <person name="Yu J."/>
            <person name="Vienken K."/>
            <person name="Pain A."/>
            <person name="Freitag M."/>
            <person name="Selker E.U."/>
            <person name="Archer D.B."/>
            <person name="Penalva M.A."/>
            <person name="Oakley B.R."/>
            <person name="Momany M."/>
            <person name="Tanaka T."/>
            <person name="Kumagai T."/>
            <person name="Asai K."/>
            <person name="Machida M."/>
            <person name="Nierman W.C."/>
            <person name="Denning D.W."/>
            <person name="Caddick M.X."/>
            <person name="Hynes M."/>
            <person name="Paoletti M."/>
            <person name="Fischer R."/>
            <person name="Miller B.L."/>
            <person name="Dyer P.S."/>
            <person name="Sachs M.S."/>
            <person name="Osmani S.A."/>
            <person name="Birren B.W."/>
        </authorList>
    </citation>
    <scope>NUCLEOTIDE SEQUENCE [LARGE SCALE GENOMIC DNA]</scope>
    <source>
        <strain>FGSC A4 / ATCC 38163 / CBS 112.46 / NRRL 194 / M139</strain>
    </source>
</reference>
<reference key="3">
    <citation type="journal article" date="2009" name="Fungal Genet. Biol.">
        <title>The 2008 update of the Aspergillus nidulans genome annotation: a community effort.</title>
        <authorList>
            <person name="Wortman J.R."/>
            <person name="Gilsenan J.M."/>
            <person name="Joardar V."/>
            <person name="Deegan J."/>
            <person name="Clutterbuck J."/>
            <person name="Andersen M.R."/>
            <person name="Archer D."/>
            <person name="Bencina M."/>
            <person name="Braus G."/>
            <person name="Coutinho P."/>
            <person name="von Dohren H."/>
            <person name="Doonan J."/>
            <person name="Driessen A.J."/>
            <person name="Durek P."/>
            <person name="Espeso E."/>
            <person name="Fekete E."/>
            <person name="Flipphi M."/>
            <person name="Estrada C.G."/>
            <person name="Geysens S."/>
            <person name="Goldman G."/>
            <person name="de Groot P.W."/>
            <person name="Hansen K."/>
            <person name="Harris S.D."/>
            <person name="Heinekamp T."/>
            <person name="Helmstaedt K."/>
            <person name="Henrissat B."/>
            <person name="Hofmann G."/>
            <person name="Homan T."/>
            <person name="Horio T."/>
            <person name="Horiuchi H."/>
            <person name="James S."/>
            <person name="Jones M."/>
            <person name="Karaffa L."/>
            <person name="Karanyi Z."/>
            <person name="Kato M."/>
            <person name="Keller N."/>
            <person name="Kelly D.E."/>
            <person name="Kiel J.A."/>
            <person name="Kim J.M."/>
            <person name="van der Klei I.J."/>
            <person name="Klis F.M."/>
            <person name="Kovalchuk A."/>
            <person name="Krasevec N."/>
            <person name="Kubicek C.P."/>
            <person name="Liu B."/>
            <person name="Maccabe A."/>
            <person name="Meyer V."/>
            <person name="Mirabito P."/>
            <person name="Miskei M."/>
            <person name="Mos M."/>
            <person name="Mullins J."/>
            <person name="Nelson D.R."/>
            <person name="Nielsen J."/>
            <person name="Oakley B.R."/>
            <person name="Osmani S.A."/>
            <person name="Pakula T."/>
            <person name="Paszewski A."/>
            <person name="Paulsen I."/>
            <person name="Pilsyk S."/>
            <person name="Pocsi I."/>
            <person name="Punt P.J."/>
            <person name="Ram A.F."/>
            <person name="Ren Q."/>
            <person name="Robellet X."/>
            <person name="Robson G."/>
            <person name="Seiboth B."/>
            <person name="van Solingen P."/>
            <person name="Specht T."/>
            <person name="Sun J."/>
            <person name="Taheri-Talesh N."/>
            <person name="Takeshita N."/>
            <person name="Ussery D."/>
            <person name="vanKuyk P.A."/>
            <person name="Visser H."/>
            <person name="van de Vondervoort P.J."/>
            <person name="de Vries R.P."/>
            <person name="Walton J."/>
            <person name="Xiang X."/>
            <person name="Xiong Y."/>
            <person name="Zeng A.P."/>
            <person name="Brandt B.W."/>
            <person name="Cornell M.J."/>
            <person name="van den Hondel C.A."/>
            <person name="Visser J."/>
            <person name="Oliver S.G."/>
            <person name="Turner G."/>
        </authorList>
    </citation>
    <scope>GENOME REANNOTATION</scope>
    <source>
        <strain>FGSC A4 / ATCC 38163 / CBS 112.46 / NRRL 194 / M139</strain>
    </source>
</reference>
<reference key="4">
    <citation type="journal article" date="2014" name="BMC Genomics">
        <title>Elucidating how the saprophytic fungus Aspergillus nidulans uses the plant polyester suberin as carbon source.</title>
        <authorList>
            <person name="Martins I."/>
            <person name="Hartmann D.O."/>
            <person name="Alves P.C."/>
            <person name="Martins C."/>
            <person name="Garcia H."/>
            <person name="Leclercq C.C."/>
            <person name="Ferreira R."/>
            <person name="He J."/>
            <person name="Renaut J."/>
            <person name="Becker J.D."/>
            <person name="Silva Pereira C."/>
        </authorList>
    </citation>
    <scope>SUBCELLULAR LOCATION</scope>
</reference>
<comment type="function">
    <text>Occurs in almost all aerobically respiring organisms and serves to protect cells from the toxic effects of hydrogen peroxide.</text>
</comment>
<comment type="catalytic activity">
    <reaction evidence="3">
        <text>2 H2O2 = O2 + 2 H2O</text>
        <dbReference type="Rhea" id="RHEA:20309"/>
        <dbReference type="ChEBI" id="CHEBI:15377"/>
        <dbReference type="ChEBI" id="CHEBI:15379"/>
        <dbReference type="ChEBI" id="CHEBI:16240"/>
        <dbReference type="EC" id="1.11.1.6"/>
    </reaction>
</comment>
<comment type="cofactor">
    <cofactor>
        <name>heme</name>
        <dbReference type="ChEBI" id="CHEBI:30413"/>
    </cofactor>
</comment>
<comment type="subcellular location">
    <subcellularLocation>
        <location evidence="4">Secreted</location>
    </subcellularLocation>
</comment>
<comment type="developmental stage">
    <text>Barely detectable in asexual spores (conidia), disappears after germination, and starts to accumulate 10 hours after spore inoculation, throughout growth and conidiation.</text>
</comment>
<comment type="induction">
    <text>By hydrogen peroxide, heat shock, paraquat, or uric acid catabolism but not by osmotic stress.</text>
</comment>
<comment type="similarity">
    <text evidence="5">Belongs to the catalase family.</text>
</comment>
<organism>
    <name type="scientific">Emericella nidulans (strain FGSC A4 / ATCC 38163 / CBS 112.46 / NRRL 194 / M139)</name>
    <name type="common">Aspergillus nidulans</name>
    <dbReference type="NCBI Taxonomy" id="227321"/>
    <lineage>
        <taxon>Eukaryota</taxon>
        <taxon>Fungi</taxon>
        <taxon>Dikarya</taxon>
        <taxon>Ascomycota</taxon>
        <taxon>Pezizomycotina</taxon>
        <taxon>Eurotiomycetes</taxon>
        <taxon>Eurotiomycetidae</taxon>
        <taxon>Eurotiales</taxon>
        <taxon>Aspergillaceae</taxon>
        <taxon>Aspergillus</taxon>
        <taxon>Aspergillus subgen. Nidulantes</taxon>
    </lineage>
</organism>
<sequence>MRALGLVGLVGVANAVCPYMTGELGRRDTNPDATEATEEFLSEYYLDDTDSYLTTDVGGPIEDQQSLKAGARGSTLLEDFIFRQKIQRFDHERVPERAVHARGAGAHGVFTSYGDFSNITAASFLSAEGKETPVFVRFSTVAGSRGSSDLARDVHGFATRFYTDEGNFDIVGNNIPVFFIQDAIQFPDLIHAVKPKGDREIPQAATAHDAAWDFFSQQPSTLHTLLWAMAGHGIPRSFRHVDGFGVHTFRLVTEDGSTKLVKFHWKTLQGLASMVWEEAQQISGKNPDYMRQDLFESIEAGRYPEWELNVQIMDEEDQLRFGFDLFDPTKIVPEEYVPLTPLGKMTLNRNPRNYFAETEQVMFQPGHVVRGVDFTEDPLLQQGRLFSYLDTQLNRNGGPNFEQLPINQPRVAIHNNNRDGAGQMFIPLNPDAYSPNTLKGSTLKQANQTAGRGFFTAPDRTANGNLVRAKSSTFDDAWSQPRLFWNSLLPAEKQFVVNAIRFENANVKSDVVKNNVIVQLNRISNDLATRVAKAIGVDAPEPDNTYYHDNTTSNIGAFGHRLQSLAGLKIAVLASVDAEESFSAATALKAELSNDNLDVIVVAERFSNGVNQTYSASDAIQFDAVVVAPGAEKLFGAKSAANSSSTLYPAGRPLEILVDAFRFGKPVAALGSGSTAFDNAGINTAVEGVYVADAVDESFANNLEEGLTVFKFLDRFALDSDE</sequence>
<name>CATB_EMENI</name>
<proteinExistence type="evidence at transcript level"/>
<protein>
    <recommendedName>
        <fullName>Catalase B</fullName>
        <ecNumber>1.11.1.6</ecNumber>
    </recommendedName>
</protein>
<dbReference type="EC" id="1.11.1.6"/>
<dbReference type="EMBL" id="U80672">
    <property type="protein sequence ID" value="AAC49713.1"/>
    <property type="molecule type" value="Genomic_DNA"/>
</dbReference>
<dbReference type="EMBL" id="AACD01000172">
    <property type="protein sequence ID" value="EAA66406.1"/>
    <property type="molecule type" value="Genomic_DNA"/>
</dbReference>
<dbReference type="EMBL" id="BN001308">
    <property type="protein sequence ID" value="CBF87433.1"/>
    <property type="molecule type" value="Genomic_DNA"/>
</dbReference>
<dbReference type="RefSeq" id="XP_682608.1">
    <property type="nucleotide sequence ID" value="XM_677516.2"/>
</dbReference>
<dbReference type="SMR" id="P78619"/>
<dbReference type="STRING" id="227321.P78619"/>
<dbReference type="EnsemblFungi" id="CBF87433">
    <property type="protein sequence ID" value="CBF87433"/>
    <property type="gene ID" value="ANIA_09339"/>
</dbReference>
<dbReference type="GeneID" id="2867831"/>
<dbReference type="KEGG" id="ani:ANIA_09339"/>
<dbReference type="eggNOG" id="KOG0047">
    <property type="taxonomic scope" value="Eukaryota"/>
</dbReference>
<dbReference type="HOGENOM" id="CLU_010645_3_0_1"/>
<dbReference type="InParanoid" id="P78619"/>
<dbReference type="OMA" id="YGDWSNI"/>
<dbReference type="OrthoDB" id="6880011at2759"/>
<dbReference type="Proteomes" id="UP000000560">
    <property type="component" value="Chromosome VIII"/>
</dbReference>
<dbReference type="GO" id="GO:0005829">
    <property type="term" value="C:cytosol"/>
    <property type="evidence" value="ECO:0000318"/>
    <property type="project" value="GO_Central"/>
</dbReference>
<dbReference type="GO" id="GO:0005576">
    <property type="term" value="C:extracellular region"/>
    <property type="evidence" value="ECO:0007669"/>
    <property type="project" value="UniProtKB-SubCell"/>
</dbReference>
<dbReference type="GO" id="GO:0004096">
    <property type="term" value="F:catalase activity"/>
    <property type="evidence" value="ECO:0000318"/>
    <property type="project" value="GO_Central"/>
</dbReference>
<dbReference type="GO" id="GO:0020037">
    <property type="term" value="F:heme binding"/>
    <property type="evidence" value="ECO:0000318"/>
    <property type="project" value="GO_Central"/>
</dbReference>
<dbReference type="GO" id="GO:0046872">
    <property type="term" value="F:metal ion binding"/>
    <property type="evidence" value="ECO:0007669"/>
    <property type="project" value="UniProtKB-KW"/>
</dbReference>
<dbReference type="GO" id="GO:0042744">
    <property type="term" value="P:hydrogen peroxide catabolic process"/>
    <property type="evidence" value="ECO:0000318"/>
    <property type="project" value="GO_Central"/>
</dbReference>
<dbReference type="GO" id="GO:0006979">
    <property type="term" value="P:response to oxidative stress"/>
    <property type="evidence" value="ECO:0000318"/>
    <property type="project" value="GO_Central"/>
</dbReference>
<dbReference type="CDD" id="cd03132">
    <property type="entry name" value="GATase1_catalase"/>
    <property type="match status" value="1"/>
</dbReference>
<dbReference type="FunFam" id="2.40.180.10:FF:000003">
    <property type="entry name" value="Catalase"/>
    <property type="match status" value="1"/>
</dbReference>
<dbReference type="FunFam" id="3.40.50.880:FF:000043">
    <property type="entry name" value="Catalase"/>
    <property type="match status" value="1"/>
</dbReference>
<dbReference type="FunFam" id="1.20.1370.20:FF:000001">
    <property type="entry name" value="Catalase HPII"/>
    <property type="match status" value="1"/>
</dbReference>
<dbReference type="Gene3D" id="1.20.1370.20">
    <property type="match status" value="1"/>
</dbReference>
<dbReference type="Gene3D" id="3.40.50.880">
    <property type="match status" value="1"/>
</dbReference>
<dbReference type="Gene3D" id="2.40.180.10">
    <property type="entry name" value="Catalase core domain"/>
    <property type="match status" value="1"/>
</dbReference>
<dbReference type="InterPro" id="IPR018028">
    <property type="entry name" value="Catalase"/>
</dbReference>
<dbReference type="InterPro" id="IPR024708">
    <property type="entry name" value="Catalase_AS"/>
</dbReference>
<dbReference type="InterPro" id="IPR024712">
    <property type="entry name" value="Catalase_clade2"/>
</dbReference>
<dbReference type="InterPro" id="IPR043156">
    <property type="entry name" value="Catalase_clade2_helical"/>
</dbReference>
<dbReference type="InterPro" id="IPR011614">
    <property type="entry name" value="Catalase_core"/>
</dbReference>
<dbReference type="InterPro" id="IPR002226">
    <property type="entry name" value="Catalase_haem_BS"/>
</dbReference>
<dbReference type="InterPro" id="IPR010582">
    <property type="entry name" value="Catalase_immune_responsive"/>
</dbReference>
<dbReference type="InterPro" id="IPR041399">
    <property type="entry name" value="Catalase_large_C"/>
</dbReference>
<dbReference type="InterPro" id="IPR020835">
    <property type="entry name" value="Catalase_sf"/>
</dbReference>
<dbReference type="InterPro" id="IPR029062">
    <property type="entry name" value="Class_I_gatase-like"/>
</dbReference>
<dbReference type="PANTHER" id="PTHR42821">
    <property type="entry name" value="CATALASE"/>
    <property type="match status" value="1"/>
</dbReference>
<dbReference type="PANTHER" id="PTHR42821:SF3">
    <property type="entry name" value="CATALASE B"/>
    <property type="match status" value="1"/>
</dbReference>
<dbReference type="Pfam" id="PF00199">
    <property type="entry name" value="Catalase"/>
    <property type="match status" value="1"/>
</dbReference>
<dbReference type="Pfam" id="PF06628">
    <property type="entry name" value="Catalase-rel"/>
    <property type="match status" value="1"/>
</dbReference>
<dbReference type="Pfam" id="PF18011">
    <property type="entry name" value="Catalase_C"/>
    <property type="match status" value="1"/>
</dbReference>
<dbReference type="PIRSF" id="PIRSF038927">
    <property type="entry name" value="Catalase_clade2"/>
    <property type="match status" value="1"/>
</dbReference>
<dbReference type="PRINTS" id="PR00067">
    <property type="entry name" value="CATALASE"/>
</dbReference>
<dbReference type="SMART" id="SM01060">
    <property type="entry name" value="Catalase"/>
    <property type="match status" value="1"/>
</dbReference>
<dbReference type="SUPFAM" id="SSF56634">
    <property type="entry name" value="Heme-dependent catalase-like"/>
    <property type="match status" value="1"/>
</dbReference>
<dbReference type="PROSITE" id="PS00437">
    <property type="entry name" value="CATALASE_1"/>
    <property type="match status" value="1"/>
</dbReference>
<dbReference type="PROSITE" id="PS00438">
    <property type="entry name" value="CATALASE_2"/>
    <property type="match status" value="1"/>
</dbReference>
<dbReference type="PROSITE" id="PS51402">
    <property type="entry name" value="CATALASE_3"/>
    <property type="match status" value="1"/>
</dbReference>
<evidence type="ECO:0000250" key="1"/>
<evidence type="ECO:0000255" key="2"/>
<evidence type="ECO:0000255" key="3">
    <source>
        <dbReference type="PROSITE-ProRule" id="PRU10013"/>
    </source>
</evidence>
<evidence type="ECO:0000269" key="4">
    <source>
    </source>
</evidence>
<evidence type="ECO:0000305" key="5"/>
<accession>P78619</accession>
<accession>C8VR41</accession>
<accession>Q5AQU1</accession>